<dbReference type="EMBL" id="AF040102">
    <property type="protein sequence ID" value="AAC83464.1"/>
    <property type="molecule type" value="mRNA"/>
</dbReference>
<dbReference type="EMBL" id="AL163763">
    <property type="protein sequence ID" value="CAB87414.1"/>
    <property type="molecule type" value="Genomic_DNA"/>
</dbReference>
<dbReference type="EMBL" id="CP002686">
    <property type="protein sequence ID" value="AEE79486.1"/>
    <property type="molecule type" value="Genomic_DNA"/>
</dbReference>
<dbReference type="EMBL" id="CP002686">
    <property type="protein sequence ID" value="AEE79487.1"/>
    <property type="molecule type" value="Genomic_DNA"/>
</dbReference>
<dbReference type="EMBL" id="AY064006">
    <property type="protein sequence ID" value="AAL36362.1"/>
    <property type="molecule type" value="mRNA"/>
</dbReference>
<dbReference type="EMBL" id="BT001961">
    <property type="protein sequence ID" value="AAN71960.1"/>
    <property type="molecule type" value="mRNA"/>
</dbReference>
<dbReference type="PIR" id="T47732">
    <property type="entry name" value="T47732"/>
</dbReference>
<dbReference type="PIR" id="T50773">
    <property type="entry name" value="T50773"/>
</dbReference>
<dbReference type="SMR" id="O49160"/>
<dbReference type="BioGRID" id="10097">
    <property type="interactions" value="75"/>
</dbReference>
<dbReference type="FunCoup" id="O49160">
    <property type="interactions" value="4476"/>
</dbReference>
<dbReference type="IntAct" id="O49160">
    <property type="interactions" value="13"/>
</dbReference>
<dbReference type="MINT" id="O49160"/>
<dbReference type="STRING" id="3702.O49160"/>
<dbReference type="iPTMnet" id="O49160"/>
<dbReference type="PaxDb" id="3702-AT3G56150.2"/>
<dbReference type="ProteomicsDB" id="222346"/>
<dbReference type="EnsemblPlants" id="AT3G56150.1">
    <property type="protein sequence ID" value="AT3G56150.1"/>
    <property type="gene ID" value="AT3G56150"/>
</dbReference>
<dbReference type="EnsemblPlants" id="AT3G56150.2">
    <property type="protein sequence ID" value="AT3G56150.2"/>
    <property type="gene ID" value="AT3G56150"/>
</dbReference>
<dbReference type="GeneID" id="824781"/>
<dbReference type="Gramene" id="AT3G56150.1">
    <property type="protein sequence ID" value="AT3G56150.1"/>
    <property type="gene ID" value="AT3G56150"/>
</dbReference>
<dbReference type="Gramene" id="AT3G56150.2">
    <property type="protein sequence ID" value="AT3G56150.2"/>
    <property type="gene ID" value="AT3G56150"/>
</dbReference>
<dbReference type="KEGG" id="ath:AT3G56150"/>
<dbReference type="Araport" id="AT3G56150"/>
<dbReference type="TAIR" id="AT3G56150">
    <property type="gene designation" value="EIF3C"/>
</dbReference>
<dbReference type="eggNOG" id="KOG1076">
    <property type="taxonomic scope" value="Eukaryota"/>
</dbReference>
<dbReference type="HOGENOM" id="CLU_004304_0_1_1"/>
<dbReference type="InParanoid" id="O49160"/>
<dbReference type="OMA" id="FRCGLIK"/>
<dbReference type="PhylomeDB" id="O49160"/>
<dbReference type="CD-CODE" id="4299E36E">
    <property type="entry name" value="Nucleolus"/>
</dbReference>
<dbReference type="PRO" id="PR:O49160"/>
<dbReference type="Proteomes" id="UP000006548">
    <property type="component" value="Chromosome 3"/>
</dbReference>
<dbReference type="ExpressionAtlas" id="O49160">
    <property type="expression patterns" value="baseline and differential"/>
</dbReference>
<dbReference type="GO" id="GO:0005829">
    <property type="term" value="C:cytosol"/>
    <property type="evidence" value="ECO:0007005"/>
    <property type="project" value="TAIR"/>
</dbReference>
<dbReference type="GO" id="GO:0016282">
    <property type="term" value="C:eukaryotic 43S preinitiation complex"/>
    <property type="evidence" value="ECO:0007669"/>
    <property type="project" value="UniProtKB-UniRule"/>
</dbReference>
<dbReference type="GO" id="GO:0033290">
    <property type="term" value="C:eukaryotic 48S preinitiation complex"/>
    <property type="evidence" value="ECO:0007669"/>
    <property type="project" value="UniProtKB-UniRule"/>
</dbReference>
<dbReference type="GO" id="GO:0005852">
    <property type="term" value="C:eukaryotic translation initiation factor 3 complex"/>
    <property type="evidence" value="ECO:0007669"/>
    <property type="project" value="UniProtKB-UniRule"/>
</dbReference>
<dbReference type="GO" id="GO:0003729">
    <property type="term" value="F:mRNA binding"/>
    <property type="evidence" value="ECO:0000314"/>
    <property type="project" value="TAIR"/>
</dbReference>
<dbReference type="GO" id="GO:0003743">
    <property type="term" value="F:translation initiation factor activity"/>
    <property type="evidence" value="ECO:0007669"/>
    <property type="project" value="UniProtKB-UniRule"/>
</dbReference>
<dbReference type="GO" id="GO:0031369">
    <property type="term" value="F:translation initiation factor binding"/>
    <property type="evidence" value="ECO:0007669"/>
    <property type="project" value="InterPro"/>
</dbReference>
<dbReference type="GO" id="GO:0001732">
    <property type="term" value="P:formation of cytoplasmic translation initiation complex"/>
    <property type="evidence" value="ECO:0007669"/>
    <property type="project" value="UniProtKB-UniRule"/>
</dbReference>
<dbReference type="FunFam" id="1.10.10.10:FF:000461">
    <property type="entry name" value="Eukaryotic translation initiation factor 3 subunit C"/>
    <property type="match status" value="1"/>
</dbReference>
<dbReference type="Gene3D" id="1.10.10.10">
    <property type="entry name" value="Winged helix-like DNA-binding domain superfamily/Winged helix DNA-binding domain"/>
    <property type="match status" value="1"/>
</dbReference>
<dbReference type="HAMAP" id="MF_03002">
    <property type="entry name" value="eIF3c"/>
    <property type="match status" value="1"/>
</dbReference>
<dbReference type="InterPro" id="IPR027516">
    <property type="entry name" value="EIF3C"/>
</dbReference>
<dbReference type="InterPro" id="IPR008905">
    <property type="entry name" value="EIF3C_N_dom"/>
</dbReference>
<dbReference type="InterPro" id="IPR000717">
    <property type="entry name" value="PCI_dom"/>
</dbReference>
<dbReference type="InterPro" id="IPR036388">
    <property type="entry name" value="WH-like_DNA-bd_sf"/>
</dbReference>
<dbReference type="InterPro" id="IPR036390">
    <property type="entry name" value="WH_DNA-bd_sf"/>
</dbReference>
<dbReference type="PANTHER" id="PTHR13937">
    <property type="entry name" value="EUKARYOTIC TRANSLATION INITATION FACTOR 3, SUBUNIT 8 EIF3S8 -RELATED"/>
    <property type="match status" value="1"/>
</dbReference>
<dbReference type="PANTHER" id="PTHR13937:SF0">
    <property type="entry name" value="EUKARYOTIC TRANSLATION INITIATION FACTOR 3 SUBUNIT C-RELATED"/>
    <property type="match status" value="1"/>
</dbReference>
<dbReference type="Pfam" id="PF05470">
    <property type="entry name" value="eIF-3c_N"/>
    <property type="match status" value="1"/>
</dbReference>
<dbReference type="Pfam" id="PF01399">
    <property type="entry name" value="PCI"/>
    <property type="match status" value="1"/>
</dbReference>
<dbReference type="SMART" id="SM00088">
    <property type="entry name" value="PINT"/>
    <property type="match status" value="1"/>
</dbReference>
<dbReference type="SUPFAM" id="SSF46785">
    <property type="entry name" value="Winged helix' DNA-binding domain"/>
    <property type="match status" value="1"/>
</dbReference>
<dbReference type="PROSITE" id="PS50250">
    <property type="entry name" value="PCI"/>
    <property type="match status" value="1"/>
</dbReference>
<comment type="function">
    <text evidence="1">Component of the eukaryotic translation initiation factor 3 (eIF-3) complex, which is involved in protein synthesis of a specialized repertoire of mRNAs and, together with other initiation factors, stimulates binding of mRNA and methionyl-tRNAi to the 40S ribosome. The eIF-3 complex specifically targets and initiates translation of a subset of mRNAs involved in cell proliferation.</text>
</comment>
<comment type="subunit">
    <text evidence="1 4 5">Component of the eukaryotic translation initiation factor 3 (eIF-3) complex (Potential) (PubMed:15548739, PubMed:9849901). Binds to the translation initiation factors TIF3C1 and TIF3H1 (PubMed:15548739, PubMed:9849901). Interacts with CSN1 (Potential) (PubMed:9849901). Associates with the CSN (COP9 signalosome) complex (PubMed:9849901).</text>
</comment>
<comment type="interaction">
    <interactant intactId="EBI-1635551">
        <id>O49160</id>
    </interactant>
    <interactant intactId="EBI-8107038">
        <id>P42818</id>
        <label>ATPK1</label>
    </interactant>
    <organismsDiffer>false</organismsDiffer>
    <experiments>2</experiments>
</comment>
<comment type="interaction">
    <interactant intactId="EBI-1635551">
        <id>O49160</id>
    </interactant>
    <interactant intactId="EBI-7216904">
        <id>F4K210</id>
        <label>MAF19.20</label>
    </interactant>
    <organismsDiffer>false</organismsDiffer>
    <experiments>4</experiments>
</comment>
<comment type="interaction">
    <interactant intactId="EBI-1635551">
        <id>O49160</id>
    </interactant>
    <interactant intactId="EBI-1635572">
        <id>Q9C5Z3</id>
        <label>TIF3E1</label>
    </interactant>
    <organismsDiffer>false</organismsDiffer>
    <experiments>3</experiments>
</comment>
<comment type="interaction">
    <interactant intactId="EBI-1635551">
        <id>O49160</id>
    </interactant>
    <interactant intactId="EBI-1382370">
        <id>Q9FR53</id>
        <label>TOR</label>
    </interactant>
    <organismsDiffer>false</organismsDiffer>
    <experiments>3</experiments>
</comment>
<comment type="interaction">
    <interactant intactId="EBI-1635551">
        <id>O49160</id>
    </interactant>
    <interactant intactId="EBI-1635581">
        <id>Q9M4T6</id>
    </interactant>
    <organismsDiffer>false</organismsDiffer>
    <experiments>2</experiments>
</comment>
<comment type="subcellular location">
    <subcellularLocation>
        <location evidence="1">Cytoplasm</location>
    </subcellularLocation>
</comment>
<comment type="similarity">
    <text evidence="1">Belongs to the eIF-3 subunit C family.</text>
</comment>
<name>EIF3C_ARATH</name>
<accession>O49160</accession>
<accession>Q9LYM6</accession>
<evidence type="ECO:0000255" key="1">
    <source>
        <dbReference type="HAMAP-Rule" id="MF_03002"/>
    </source>
</evidence>
<evidence type="ECO:0000255" key="2">
    <source>
        <dbReference type="PROSITE-ProRule" id="PRU01185"/>
    </source>
</evidence>
<evidence type="ECO:0000256" key="3">
    <source>
        <dbReference type="SAM" id="MobiDB-lite"/>
    </source>
</evidence>
<evidence type="ECO:0000269" key="4">
    <source>
    </source>
</evidence>
<evidence type="ECO:0000269" key="5">
    <source>
    </source>
</evidence>
<evidence type="ECO:0000305" key="6"/>
<evidence type="ECO:0007744" key="7">
    <source>
    </source>
</evidence>
<evidence type="ECO:0007744" key="8">
    <source>
    </source>
</evidence>
<evidence type="ECO:0007744" key="9">
    <source>
    </source>
</evidence>
<organism>
    <name type="scientific">Arabidopsis thaliana</name>
    <name type="common">Mouse-ear cress</name>
    <dbReference type="NCBI Taxonomy" id="3702"/>
    <lineage>
        <taxon>Eukaryota</taxon>
        <taxon>Viridiplantae</taxon>
        <taxon>Streptophyta</taxon>
        <taxon>Embryophyta</taxon>
        <taxon>Tracheophyta</taxon>
        <taxon>Spermatophyta</taxon>
        <taxon>Magnoliopsida</taxon>
        <taxon>eudicotyledons</taxon>
        <taxon>Gunneridae</taxon>
        <taxon>Pentapetalae</taxon>
        <taxon>rosids</taxon>
        <taxon>malvids</taxon>
        <taxon>Brassicales</taxon>
        <taxon>Brassicaceae</taxon>
        <taxon>Camelineae</taxon>
        <taxon>Arabidopsis</taxon>
    </lineage>
</organism>
<gene>
    <name type="primary">TIF3C1</name>
    <name type="ordered locus">At3g56150</name>
    <name type="ORF">F18O21_110</name>
</gene>
<feature type="chain" id="PRO_0000123527" description="Eukaryotic translation initiation factor 3 subunit C">
    <location>
        <begin position="1"/>
        <end position="900"/>
    </location>
</feature>
<feature type="domain" description="PCI" evidence="2">
    <location>
        <begin position="604"/>
        <end position="776"/>
    </location>
</feature>
<feature type="region of interest" description="Disordered" evidence="3">
    <location>
        <begin position="1"/>
        <end position="52"/>
    </location>
</feature>
<feature type="region of interest" description="Disordered" evidence="3">
    <location>
        <begin position="128"/>
        <end position="147"/>
    </location>
</feature>
<feature type="region of interest" description="Disordered" evidence="3">
    <location>
        <begin position="163"/>
        <end position="213"/>
    </location>
</feature>
<feature type="region of interest" description="Disordered" evidence="3">
    <location>
        <begin position="798"/>
        <end position="900"/>
    </location>
</feature>
<feature type="compositionally biased region" description="Polar residues" evidence="3">
    <location>
        <begin position="1"/>
        <end position="10"/>
    </location>
</feature>
<feature type="compositionally biased region" description="Acidic residues" evidence="3">
    <location>
        <begin position="12"/>
        <end position="23"/>
    </location>
</feature>
<feature type="compositionally biased region" description="Polar residues" evidence="3">
    <location>
        <begin position="134"/>
        <end position="145"/>
    </location>
</feature>
<feature type="compositionally biased region" description="Acidic residues" evidence="3">
    <location>
        <begin position="167"/>
        <end position="194"/>
    </location>
</feature>
<feature type="compositionally biased region" description="Low complexity" evidence="3">
    <location>
        <begin position="839"/>
        <end position="848"/>
    </location>
</feature>
<feature type="compositionally biased region" description="Low complexity" evidence="3">
    <location>
        <begin position="857"/>
        <end position="866"/>
    </location>
</feature>
<feature type="compositionally biased region" description="Gly residues" evidence="3">
    <location>
        <begin position="867"/>
        <end position="880"/>
    </location>
</feature>
<feature type="modified residue" description="Phosphotyrosine" evidence="8">
    <location>
        <position position="35"/>
    </location>
</feature>
<feature type="modified residue" description="Phosphoserine" evidence="9">
    <location>
        <position position="38"/>
    </location>
</feature>
<feature type="modified residue" description="Phosphoserine" evidence="7 9">
    <location>
        <position position="40"/>
    </location>
</feature>
<feature type="modified residue" description="Phosphoserine" evidence="9">
    <location>
        <position position="204"/>
    </location>
</feature>
<feature type="sequence conflict" description="In Ref. 1; AAC83464." evidence="6" ref="1">
    <original>Y</original>
    <variation>N</variation>
    <location>
        <position position="65"/>
    </location>
</feature>
<feature type="sequence conflict" description="In Ref. 1; AAC83464." evidence="6" ref="1">
    <original>G</original>
    <variation>E</variation>
    <location>
        <position position="254"/>
    </location>
</feature>
<feature type="sequence conflict" description="In Ref. 1; AAC83464." evidence="6" ref="1">
    <original>K</original>
    <variation>N</variation>
    <location>
        <position position="275"/>
    </location>
</feature>
<feature type="sequence conflict" description="In Ref. 1; AAC83464." evidence="6" ref="1">
    <original>S</original>
    <variation>F</variation>
    <location>
        <position position="569"/>
    </location>
</feature>
<feature type="sequence conflict" description="In Ref. 1; AAC83464." evidence="6" ref="1">
    <original>IK</original>
    <variation>VQ</variation>
    <location>
        <begin position="710"/>
        <end position="711"/>
    </location>
</feature>
<feature type="sequence conflict" description="In Ref. 1; AAC83464." evidence="6" ref="1">
    <original>L</original>
    <variation>V</variation>
    <location>
        <position position="715"/>
    </location>
</feature>
<keyword id="KW-0963">Cytoplasm</keyword>
<keyword id="KW-0396">Initiation factor</keyword>
<keyword id="KW-0597">Phosphoprotein</keyword>
<keyword id="KW-0648">Protein biosynthesis</keyword>
<keyword id="KW-1185">Reference proteome</keyword>
<protein>
    <recommendedName>
        <fullName evidence="1">Eukaryotic translation initiation factor 3 subunit C</fullName>
        <shortName evidence="1">eIF3c</shortName>
    </recommendedName>
    <alternativeName>
        <fullName evidence="1">Eukaryotic translation initiation factor 3 subunit 8</fullName>
    </alternativeName>
    <alternativeName>
        <fullName evidence="1">eIF3 p110</fullName>
    </alternativeName>
    <alternativeName>
        <fullName>p105</fullName>
    </alternativeName>
</protein>
<sequence>MTSRFFTQVGSESEDESDYEVEVNEVQNDDVNNRYLQSGSEDDDDTDTKRVVKPAKDKRFEEMTYTVDQMKNAMKINDWVSLQENFDKVNKQLEKVMRITEAVKPPTLYIKTLVMLEDFLNEALANKEAKKKMSTSNSKALNSMKQKLKKNNKLYEDDINKYREAPEVEEEKQPEDDDDDDDDDDEVEDDDDSSIDGPTVDPGSDVDEPTDNLTWEKMLSKKDKLLEKLMNKDPKEITWDWVNKKFKEIVAARGKKGTARFELVDQLTHLTKIAKTPAQKLEILFSVISAQFDVNPGLSGHMPINVWKKCVLNMLTILDILVKYSNIVVDDTVEPDENETSKPTDYDGKIRVWGNLVAFLERVDTEFFKSLQCIDPHTREYVERLRDEPMFLALAQNIQDYFERMGDFKAAAKVALRRVEAIYYKPQEVYDAMRKLAELVEEEEETEEAKEESGPPTSFIVVPEVVPRKPTFPESSRAMMDILVSLIYRNGDERTKARAMLCDINHHALMDNFVTARDLLLMSHLQDNIQHMDISTQILFNRTMAQLGLCAFRAGMITESHSCLSELYSGQRVRELLAQGVSQSRYHEKTPEQERMERRRQMPYHMHLNLELLEAVHLICAMLLEVPNMAANSHDAKRRVISKNFRRLLEISERQAFTAPPENVRDHVMAATRALTKGDFQKAFEVLNSLEVWRLLKNRDSILDMVKDRIKEEALRTYLFTYSSSYESLSLDQLAKMFDVSEPQVHSIVSKMMINEELHASWDQPTRCIVFHEVQHSRLQSLAFQLTEKLSILAESNERAMESRTGGGGLDLSSRRRDNNQDYAGAASGGGGYWQDKANYGQGRQGNRSGYGGGRSSGQNGQWSGQNRGGGYAGRVGSGNRGMQMDGSSRMVSLNRGVRT</sequence>
<proteinExistence type="evidence at protein level"/>
<reference key="1">
    <citation type="journal article" date="1998" name="FEBS Lett.">
        <title>The Arabidopsis homologue of an eIF3 complex subunit associates with the COP9 complex.</title>
        <authorList>
            <person name="Karniol B."/>
            <person name="Yahalom A."/>
            <person name="Kwok S."/>
            <person name="Tsuge T."/>
            <person name="Matsui M."/>
            <person name="Deng X.-W."/>
            <person name="Chamovitz D.A."/>
        </authorList>
    </citation>
    <scope>NUCLEOTIDE SEQUENCE [MRNA]</scope>
    <scope>INTERACTION WITH CSN1 AND TIF3E1</scope>
    <scope>SUBUNIT</scope>
    <source>
        <strain>cv. Columbia</strain>
    </source>
</reference>
<reference key="2">
    <citation type="journal article" date="2000" name="Nature">
        <title>Sequence and analysis of chromosome 3 of the plant Arabidopsis thaliana.</title>
        <authorList>
            <person name="Salanoubat M."/>
            <person name="Lemcke K."/>
            <person name="Rieger M."/>
            <person name="Ansorge W."/>
            <person name="Unseld M."/>
            <person name="Fartmann B."/>
            <person name="Valle G."/>
            <person name="Bloecker H."/>
            <person name="Perez-Alonso M."/>
            <person name="Obermaier B."/>
            <person name="Delseny M."/>
            <person name="Boutry M."/>
            <person name="Grivell L.A."/>
            <person name="Mache R."/>
            <person name="Puigdomenech P."/>
            <person name="De Simone V."/>
            <person name="Choisne N."/>
            <person name="Artiguenave F."/>
            <person name="Robert C."/>
            <person name="Brottier P."/>
            <person name="Wincker P."/>
            <person name="Cattolico L."/>
            <person name="Weissenbach J."/>
            <person name="Saurin W."/>
            <person name="Quetier F."/>
            <person name="Schaefer M."/>
            <person name="Mueller-Auer S."/>
            <person name="Gabel C."/>
            <person name="Fuchs M."/>
            <person name="Benes V."/>
            <person name="Wurmbach E."/>
            <person name="Drzonek H."/>
            <person name="Erfle H."/>
            <person name="Jordan N."/>
            <person name="Bangert S."/>
            <person name="Wiedelmann R."/>
            <person name="Kranz H."/>
            <person name="Voss H."/>
            <person name="Holland R."/>
            <person name="Brandt P."/>
            <person name="Nyakatura G."/>
            <person name="Vezzi A."/>
            <person name="D'Angelo M."/>
            <person name="Pallavicini A."/>
            <person name="Toppo S."/>
            <person name="Simionati B."/>
            <person name="Conrad A."/>
            <person name="Hornischer K."/>
            <person name="Kauer G."/>
            <person name="Loehnert T.-H."/>
            <person name="Nordsiek G."/>
            <person name="Reichelt J."/>
            <person name="Scharfe M."/>
            <person name="Schoen O."/>
            <person name="Bargues M."/>
            <person name="Terol J."/>
            <person name="Climent J."/>
            <person name="Navarro P."/>
            <person name="Collado C."/>
            <person name="Perez-Perez A."/>
            <person name="Ottenwaelder B."/>
            <person name="Duchemin D."/>
            <person name="Cooke R."/>
            <person name="Laudie M."/>
            <person name="Berger-Llauro C."/>
            <person name="Purnelle B."/>
            <person name="Masuy D."/>
            <person name="de Haan M."/>
            <person name="Maarse A.C."/>
            <person name="Alcaraz J.-P."/>
            <person name="Cottet A."/>
            <person name="Casacuberta E."/>
            <person name="Monfort A."/>
            <person name="Argiriou A."/>
            <person name="Flores M."/>
            <person name="Liguori R."/>
            <person name="Vitale D."/>
            <person name="Mannhaupt G."/>
            <person name="Haase D."/>
            <person name="Schoof H."/>
            <person name="Rudd S."/>
            <person name="Zaccaria P."/>
            <person name="Mewes H.-W."/>
            <person name="Mayer K.F.X."/>
            <person name="Kaul S."/>
            <person name="Town C.D."/>
            <person name="Koo H.L."/>
            <person name="Tallon L.J."/>
            <person name="Jenkins J."/>
            <person name="Rooney T."/>
            <person name="Rizzo M."/>
            <person name="Walts A."/>
            <person name="Utterback T."/>
            <person name="Fujii C.Y."/>
            <person name="Shea T.P."/>
            <person name="Creasy T.H."/>
            <person name="Haas B."/>
            <person name="Maiti R."/>
            <person name="Wu D."/>
            <person name="Peterson J."/>
            <person name="Van Aken S."/>
            <person name="Pai G."/>
            <person name="Militscher J."/>
            <person name="Sellers P."/>
            <person name="Gill J.E."/>
            <person name="Feldblyum T.V."/>
            <person name="Preuss D."/>
            <person name="Lin X."/>
            <person name="Nierman W.C."/>
            <person name="Salzberg S.L."/>
            <person name="White O."/>
            <person name="Venter J.C."/>
            <person name="Fraser C.M."/>
            <person name="Kaneko T."/>
            <person name="Nakamura Y."/>
            <person name="Sato S."/>
            <person name="Kato T."/>
            <person name="Asamizu E."/>
            <person name="Sasamoto S."/>
            <person name="Kimura T."/>
            <person name="Idesawa K."/>
            <person name="Kawashima K."/>
            <person name="Kishida Y."/>
            <person name="Kiyokawa C."/>
            <person name="Kohara M."/>
            <person name="Matsumoto M."/>
            <person name="Matsuno A."/>
            <person name="Muraki A."/>
            <person name="Nakayama S."/>
            <person name="Nakazaki N."/>
            <person name="Shinpo S."/>
            <person name="Takeuchi C."/>
            <person name="Wada T."/>
            <person name="Watanabe A."/>
            <person name="Yamada M."/>
            <person name="Yasuda M."/>
            <person name="Tabata S."/>
        </authorList>
    </citation>
    <scope>NUCLEOTIDE SEQUENCE [LARGE SCALE GENOMIC DNA]</scope>
    <source>
        <strain>cv. Columbia</strain>
    </source>
</reference>
<reference key="3">
    <citation type="journal article" date="2017" name="Plant J.">
        <title>Araport11: a complete reannotation of the Arabidopsis thaliana reference genome.</title>
        <authorList>
            <person name="Cheng C.Y."/>
            <person name="Krishnakumar V."/>
            <person name="Chan A.P."/>
            <person name="Thibaud-Nissen F."/>
            <person name="Schobel S."/>
            <person name="Town C.D."/>
        </authorList>
    </citation>
    <scope>GENOME REANNOTATION</scope>
    <source>
        <strain>cv. Columbia</strain>
    </source>
</reference>
<reference key="4">
    <citation type="journal article" date="2003" name="Science">
        <title>Empirical analysis of transcriptional activity in the Arabidopsis genome.</title>
        <authorList>
            <person name="Yamada K."/>
            <person name="Lim J."/>
            <person name="Dale J.M."/>
            <person name="Chen H."/>
            <person name="Shinn P."/>
            <person name="Palm C.J."/>
            <person name="Southwick A.M."/>
            <person name="Wu H.C."/>
            <person name="Kim C.J."/>
            <person name="Nguyen M."/>
            <person name="Pham P.K."/>
            <person name="Cheuk R.F."/>
            <person name="Karlin-Newmann G."/>
            <person name="Liu S.X."/>
            <person name="Lam B."/>
            <person name="Sakano H."/>
            <person name="Wu T."/>
            <person name="Yu G."/>
            <person name="Miranda M."/>
            <person name="Quach H.L."/>
            <person name="Tripp M."/>
            <person name="Chang C.H."/>
            <person name="Lee J.M."/>
            <person name="Toriumi M.J."/>
            <person name="Chan M.M."/>
            <person name="Tang C.C."/>
            <person name="Onodera C.S."/>
            <person name="Deng J.M."/>
            <person name="Akiyama K."/>
            <person name="Ansari Y."/>
            <person name="Arakawa T."/>
            <person name="Banh J."/>
            <person name="Banno F."/>
            <person name="Bowser L."/>
            <person name="Brooks S.Y."/>
            <person name="Carninci P."/>
            <person name="Chao Q."/>
            <person name="Choy N."/>
            <person name="Enju A."/>
            <person name="Goldsmith A.D."/>
            <person name="Gurjal M."/>
            <person name="Hansen N.F."/>
            <person name="Hayashizaki Y."/>
            <person name="Johnson-Hopson C."/>
            <person name="Hsuan V.W."/>
            <person name="Iida K."/>
            <person name="Karnes M."/>
            <person name="Khan S."/>
            <person name="Koesema E."/>
            <person name="Ishida J."/>
            <person name="Jiang P.X."/>
            <person name="Jones T."/>
            <person name="Kawai J."/>
            <person name="Kamiya A."/>
            <person name="Meyers C."/>
            <person name="Nakajima M."/>
            <person name="Narusaka M."/>
            <person name="Seki M."/>
            <person name="Sakurai T."/>
            <person name="Satou M."/>
            <person name="Tamse R."/>
            <person name="Vaysberg M."/>
            <person name="Wallender E.K."/>
            <person name="Wong C."/>
            <person name="Yamamura Y."/>
            <person name="Yuan S."/>
            <person name="Shinozaki K."/>
            <person name="Davis R.W."/>
            <person name="Theologis A."/>
            <person name="Ecker J.R."/>
        </authorList>
    </citation>
    <scope>NUCLEOTIDE SEQUENCE [LARGE SCALE MRNA]</scope>
    <source>
        <strain>cv. Columbia</strain>
    </source>
</reference>
<reference key="5">
    <citation type="journal article" date="2004" name="Plant Cell">
        <title>Translational regulation via 5' mRNA leader sequences revealed by mutational analysis of the Arabidopsis translation initiation factor subunit eIF3h.</title>
        <authorList>
            <person name="Kim T.-H."/>
            <person name="Kim B.-H."/>
            <person name="Yahalom A."/>
            <person name="Chamovitz D.A."/>
            <person name="von Arnim A.G."/>
        </authorList>
    </citation>
    <scope>INTERACTION WITH TIF3H1</scope>
</reference>
<reference key="6">
    <citation type="journal article" date="2008" name="J. Proteome Res.">
        <title>Site-specific phosphorylation profiling of Arabidopsis proteins by mass spectrometry and peptide chip analysis.</title>
        <authorList>
            <person name="de la Fuente van Bentem S."/>
            <person name="Anrather D."/>
            <person name="Dohnal I."/>
            <person name="Roitinger E."/>
            <person name="Csaszar E."/>
            <person name="Joore J."/>
            <person name="Buijnink J."/>
            <person name="Carreri A."/>
            <person name="Forzani C."/>
            <person name="Lorkovic Z.J."/>
            <person name="Barta A."/>
            <person name="Lecourieux D."/>
            <person name="Verhounig A."/>
            <person name="Jonak C."/>
            <person name="Hirt H."/>
        </authorList>
    </citation>
    <scope>PHOSPHORYLATION [LARGE SCALE ANALYSIS] AT SER-40</scope>
    <scope>IDENTIFICATION BY MASS SPECTROMETRY [LARGE SCALE ANALYSIS]</scope>
    <source>
        <tissue>Root</tissue>
    </source>
</reference>
<reference key="7">
    <citation type="journal article" date="2009" name="J. Proteomics">
        <title>Phosphoproteomic analysis of nuclei-enriched fractions from Arabidopsis thaliana.</title>
        <authorList>
            <person name="Jones A.M.E."/>
            <person name="MacLean D."/>
            <person name="Studholme D.J."/>
            <person name="Serna-Sanz A."/>
            <person name="Andreasson E."/>
            <person name="Rathjen J.P."/>
            <person name="Peck S.C."/>
        </authorList>
    </citation>
    <scope>PHOSPHORYLATION [LARGE SCALE ANALYSIS] AT TYR-35</scope>
    <scope>IDENTIFICATION BY MASS SPECTROMETRY [LARGE SCALE ANALYSIS]</scope>
    <source>
        <strain>cv. Columbia</strain>
    </source>
</reference>
<reference key="8">
    <citation type="journal article" date="2009" name="Plant Physiol.">
        <title>Large-scale Arabidopsis phosphoproteome profiling reveals novel chloroplast kinase substrates and phosphorylation networks.</title>
        <authorList>
            <person name="Reiland S."/>
            <person name="Messerli G."/>
            <person name="Baerenfaller K."/>
            <person name="Gerrits B."/>
            <person name="Endler A."/>
            <person name="Grossmann J."/>
            <person name="Gruissem W."/>
            <person name="Baginsky S."/>
        </authorList>
    </citation>
    <scope>PHOSPHORYLATION [LARGE SCALE ANALYSIS] AT SER-38; SER-40 AND SER-204</scope>
    <scope>IDENTIFICATION BY MASS SPECTROMETRY [LARGE SCALE ANALYSIS]</scope>
</reference>